<evidence type="ECO:0000250" key="1">
    <source>
        <dbReference type="UniProtKB" id="A6NJV1"/>
    </source>
</evidence>
<evidence type="ECO:0000305" key="2"/>
<organism>
    <name type="scientific">Xenopus laevis</name>
    <name type="common">African clawed frog</name>
    <dbReference type="NCBI Taxonomy" id="8355"/>
    <lineage>
        <taxon>Eukaryota</taxon>
        <taxon>Metazoa</taxon>
        <taxon>Chordata</taxon>
        <taxon>Craniata</taxon>
        <taxon>Vertebrata</taxon>
        <taxon>Euteleostomi</taxon>
        <taxon>Amphibia</taxon>
        <taxon>Batrachia</taxon>
        <taxon>Anura</taxon>
        <taxon>Pipoidea</taxon>
        <taxon>Pipidae</taxon>
        <taxon>Xenopodinae</taxon>
        <taxon>Xenopus</taxon>
        <taxon>Xenopus</taxon>
    </lineage>
</organism>
<gene>
    <name type="primary">cimip2cb</name>
    <name type="synonym">fam166cb</name>
</gene>
<proteinExistence type="evidence at transcript level"/>
<feature type="chain" id="PRO_0000332280" description="Ciliary microtubule inner protein 2C">
    <location>
        <begin position="1"/>
        <end position="155"/>
    </location>
</feature>
<accession>Q5M7D8</accession>
<protein>
    <recommendedName>
        <fullName>Ciliary microtubule inner protein 2C</fullName>
    </recommendedName>
    <alternativeName>
        <fullName>Protein CIMIP2C</fullName>
    </alternativeName>
</protein>
<reference key="1">
    <citation type="submission" date="2004-12" db="EMBL/GenBank/DDBJ databases">
        <authorList>
            <consortium name="NIH - Xenopus Gene Collection (XGC) project"/>
        </authorList>
    </citation>
    <scope>NUCLEOTIDE SEQUENCE [LARGE SCALE MRNA]</scope>
    <source>
        <tissue>Testis</tissue>
    </source>
</reference>
<comment type="function">
    <text evidence="1">Microtubule inner protein (MIP) part of the dynein-decorated doublet microtubules (DMTs) in cilia axoneme, which is required for motile cilia beating.</text>
</comment>
<comment type="subcellular location">
    <subcellularLocation>
        <location evidence="1">Cytoplasm</location>
        <location evidence="1">Cytoskeleton</location>
        <location evidence="1">Cilium axoneme</location>
    </subcellularLocation>
</comment>
<comment type="similarity">
    <text evidence="2">Belongs to the CIMIP2 family.</text>
</comment>
<name>CM2CB_XENLA</name>
<keyword id="KW-0966">Cell projection</keyword>
<keyword id="KW-0963">Cytoplasm</keyword>
<keyword id="KW-0206">Cytoskeleton</keyword>
<keyword id="KW-1185">Reference proteome</keyword>
<sequence>MASRSAGSLITHNNVTYIPPALMPGYRGHIPSASFTYGDTYGNTSARCFQDFRSTVLNSSRSPYCQGGQFPTSHSNDPALVIGHRSRGWDRFLHSPSWSRYNVDFKRSDELKQFHRAAEQHRDHYRDKSGTAHQVPHFIVPVKNPQTFPLPQQVL</sequence>
<dbReference type="EMBL" id="BC088692">
    <property type="protein sequence ID" value="AAH88692.1"/>
    <property type="molecule type" value="mRNA"/>
</dbReference>
<dbReference type="RefSeq" id="NP_001088885.1">
    <property type="nucleotide sequence ID" value="NM_001095416.1"/>
</dbReference>
<dbReference type="SMR" id="Q5M7D8"/>
<dbReference type="DNASU" id="496230"/>
<dbReference type="GeneID" id="496230"/>
<dbReference type="KEGG" id="xla:496230"/>
<dbReference type="AGR" id="Xenbase:XB-GENE-6252225"/>
<dbReference type="CTD" id="496230"/>
<dbReference type="Xenbase" id="XB-GENE-6252225">
    <property type="gene designation" value="cimip2c.S"/>
</dbReference>
<dbReference type="OrthoDB" id="8181742at2759"/>
<dbReference type="Proteomes" id="UP000186698">
    <property type="component" value="Chromosome 5S"/>
</dbReference>
<dbReference type="Bgee" id="496230">
    <property type="expression patterns" value="Expressed in testis and 9 other cell types or tissues"/>
</dbReference>
<dbReference type="GO" id="GO:0005879">
    <property type="term" value="C:axonemal microtubule"/>
    <property type="evidence" value="ECO:0000250"/>
    <property type="project" value="UniProtKB"/>
</dbReference>
<dbReference type="InterPro" id="IPR052329">
    <property type="entry name" value="CIMIP2C"/>
</dbReference>
<dbReference type="InterPro" id="IPR018902">
    <property type="entry name" value="CMI2A-C-like_dom"/>
</dbReference>
<dbReference type="PANTHER" id="PTHR34924:SF1">
    <property type="entry name" value="PROTEIN FAM166C"/>
    <property type="match status" value="1"/>
</dbReference>
<dbReference type="PANTHER" id="PTHR34924">
    <property type="entry name" value="UPF0573 PROTEIN C2ORF70"/>
    <property type="match status" value="1"/>
</dbReference>
<dbReference type="Pfam" id="PF10629">
    <property type="entry name" value="CMI2B-like"/>
    <property type="match status" value="1"/>
</dbReference>